<dbReference type="EC" id="2.7.7.6" evidence="1"/>
<dbReference type="EMBL" id="CP000361">
    <property type="protein sequence ID" value="ABV68117.1"/>
    <property type="molecule type" value="Genomic_DNA"/>
</dbReference>
<dbReference type="RefSeq" id="WP_004511254.1">
    <property type="nucleotide sequence ID" value="NC_009850.1"/>
</dbReference>
<dbReference type="SMR" id="A8EVZ4"/>
<dbReference type="STRING" id="367737.Abu_1884"/>
<dbReference type="GeneID" id="24305516"/>
<dbReference type="KEGG" id="abu:Abu_1884"/>
<dbReference type="eggNOG" id="COG0085">
    <property type="taxonomic scope" value="Bacteria"/>
</dbReference>
<dbReference type="HOGENOM" id="CLU_000524_4_0_7"/>
<dbReference type="Proteomes" id="UP000001136">
    <property type="component" value="Chromosome"/>
</dbReference>
<dbReference type="GO" id="GO:0000428">
    <property type="term" value="C:DNA-directed RNA polymerase complex"/>
    <property type="evidence" value="ECO:0007669"/>
    <property type="project" value="UniProtKB-KW"/>
</dbReference>
<dbReference type="GO" id="GO:0003677">
    <property type="term" value="F:DNA binding"/>
    <property type="evidence" value="ECO:0007669"/>
    <property type="project" value="UniProtKB-UniRule"/>
</dbReference>
<dbReference type="GO" id="GO:0003899">
    <property type="term" value="F:DNA-directed RNA polymerase activity"/>
    <property type="evidence" value="ECO:0007669"/>
    <property type="project" value="UniProtKB-UniRule"/>
</dbReference>
<dbReference type="GO" id="GO:0032549">
    <property type="term" value="F:ribonucleoside binding"/>
    <property type="evidence" value="ECO:0007669"/>
    <property type="project" value="InterPro"/>
</dbReference>
<dbReference type="GO" id="GO:0006351">
    <property type="term" value="P:DNA-templated transcription"/>
    <property type="evidence" value="ECO:0007669"/>
    <property type="project" value="UniProtKB-UniRule"/>
</dbReference>
<dbReference type="CDD" id="cd00653">
    <property type="entry name" value="RNA_pol_B_RPB2"/>
    <property type="match status" value="1"/>
</dbReference>
<dbReference type="Gene3D" id="2.40.50.100">
    <property type="match status" value="1"/>
</dbReference>
<dbReference type="Gene3D" id="2.40.50.150">
    <property type="match status" value="1"/>
</dbReference>
<dbReference type="Gene3D" id="3.90.1100.10">
    <property type="match status" value="2"/>
</dbReference>
<dbReference type="Gene3D" id="2.40.270.10">
    <property type="entry name" value="DNA-directed RNA polymerase, subunit 2, domain 6"/>
    <property type="match status" value="2"/>
</dbReference>
<dbReference type="Gene3D" id="3.90.1800.10">
    <property type="entry name" value="RNA polymerase alpha subunit dimerisation domain"/>
    <property type="match status" value="1"/>
</dbReference>
<dbReference type="Gene3D" id="3.90.1110.10">
    <property type="entry name" value="RNA polymerase Rpb2, domain 2"/>
    <property type="match status" value="1"/>
</dbReference>
<dbReference type="HAMAP" id="MF_01321">
    <property type="entry name" value="RNApol_bact_RpoB"/>
    <property type="match status" value="1"/>
</dbReference>
<dbReference type="InterPro" id="IPR019462">
    <property type="entry name" value="DNA-dir_RNA_pol_bsu_external_1"/>
</dbReference>
<dbReference type="InterPro" id="IPR015712">
    <property type="entry name" value="DNA-dir_RNA_pol_su2"/>
</dbReference>
<dbReference type="InterPro" id="IPR007120">
    <property type="entry name" value="DNA-dir_RNAP_su2_dom"/>
</dbReference>
<dbReference type="InterPro" id="IPR037033">
    <property type="entry name" value="DNA-dir_RNAP_su2_hyb_sf"/>
</dbReference>
<dbReference type="InterPro" id="IPR010243">
    <property type="entry name" value="RNA_pol_bsu_bac"/>
</dbReference>
<dbReference type="InterPro" id="IPR007121">
    <property type="entry name" value="RNA_pol_bsu_CS"/>
</dbReference>
<dbReference type="InterPro" id="IPR007644">
    <property type="entry name" value="RNA_pol_bsu_protrusion"/>
</dbReference>
<dbReference type="InterPro" id="IPR007642">
    <property type="entry name" value="RNA_pol_Rpb2_2"/>
</dbReference>
<dbReference type="InterPro" id="IPR037034">
    <property type="entry name" value="RNA_pol_Rpb2_2_sf"/>
</dbReference>
<dbReference type="InterPro" id="IPR007645">
    <property type="entry name" value="RNA_pol_Rpb2_3"/>
</dbReference>
<dbReference type="InterPro" id="IPR007641">
    <property type="entry name" value="RNA_pol_Rpb2_7"/>
</dbReference>
<dbReference type="InterPro" id="IPR014724">
    <property type="entry name" value="RNA_pol_RPB2_OB-fold"/>
</dbReference>
<dbReference type="NCBIfam" id="NF001616">
    <property type="entry name" value="PRK00405.1"/>
    <property type="match status" value="1"/>
</dbReference>
<dbReference type="NCBIfam" id="TIGR02013">
    <property type="entry name" value="rpoB"/>
    <property type="match status" value="1"/>
</dbReference>
<dbReference type="PANTHER" id="PTHR20856">
    <property type="entry name" value="DNA-DIRECTED RNA POLYMERASE I SUBUNIT 2"/>
    <property type="match status" value="1"/>
</dbReference>
<dbReference type="Pfam" id="PF04563">
    <property type="entry name" value="RNA_pol_Rpb2_1"/>
    <property type="match status" value="1"/>
</dbReference>
<dbReference type="Pfam" id="PF04561">
    <property type="entry name" value="RNA_pol_Rpb2_2"/>
    <property type="match status" value="2"/>
</dbReference>
<dbReference type="Pfam" id="PF04565">
    <property type="entry name" value="RNA_pol_Rpb2_3"/>
    <property type="match status" value="1"/>
</dbReference>
<dbReference type="Pfam" id="PF10385">
    <property type="entry name" value="RNA_pol_Rpb2_45"/>
    <property type="match status" value="1"/>
</dbReference>
<dbReference type="Pfam" id="PF00562">
    <property type="entry name" value="RNA_pol_Rpb2_6"/>
    <property type="match status" value="1"/>
</dbReference>
<dbReference type="Pfam" id="PF04560">
    <property type="entry name" value="RNA_pol_Rpb2_7"/>
    <property type="match status" value="1"/>
</dbReference>
<dbReference type="SUPFAM" id="SSF64484">
    <property type="entry name" value="beta and beta-prime subunits of DNA dependent RNA-polymerase"/>
    <property type="match status" value="1"/>
</dbReference>
<dbReference type="PROSITE" id="PS01166">
    <property type="entry name" value="RNA_POL_BETA"/>
    <property type="match status" value="1"/>
</dbReference>
<accession>A8EVZ4</accession>
<organism>
    <name type="scientific">Aliarcobacter butzleri (strain RM4018)</name>
    <name type="common">Arcobacter butzleri</name>
    <dbReference type="NCBI Taxonomy" id="367737"/>
    <lineage>
        <taxon>Bacteria</taxon>
        <taxon>Pseudomonadati</taxon>
        <taxon>Campylobacterota</taxon>
        <taxon>Epsilonproteobacteria</taxon>
        <taxon>Campylobacterales</taxon>
        <taxon>Arcobacteraceae</taxon>
        <taxon>Aliarcobacter</taxon>
    </lineage>
</organism>
<reference key="1">
    <citation type="journal article" date="2007" name="PLoS ONE">
        <title>The complete genome sequence and analysis of the Epsilonproteobacterium Arcobacter butzleri.</title>
        <authorList>
            <person name="Miller W.G."/>
            <person name="Parker C.T."/>
            <person name="Rubenfield M."/>
            <person name="Mendz G.L."/>
            <person name="Woesten M.M.S.M."/>
            <person name="Ussery D.W."/>
            <person name="Stolz J.F."/>
            <person name="Binnewies T.T."/>
            <person name="Hallin P.F."/>
            <person name="Wang G."/>
            <person name="Malek J.A."/>
            <person name="Rogosin A."/>
            <person name="Stanker L.H."/>
            <person name="Mandrell R.E."/>
        </authorList>
    </citation>
    <scope>NUCLEOTIDE SEQUENCE [LARGE SCALE GENOMIC DNA]</scope>
    <source>
        <strain>RM4018</strain>
    </source>
</reference>
<comment type="function">
    <text evidence="1">DNA-dependent RNA polymerase catalyzes the transcription of DNA into RNA using the four ribonucleoside triphosphates as substrates.</text>
</comment>
<comment type="catalytic activity">
    <reaction evidence="1">
        <text>RNA(n) + a ribonucleoside 5'-triphosphate = RNA(n+1) + diphosphate</text>
        <dbReference type="Rhea" id="RHEA:21248"/>
        <dbReference type="Rhea" id="RHEA-COMP:14527"/>
        <dbReference type="Rhea" id="RHEA-COMP:17342"/>
        <dbReference type="ChEBI" id="CHEBI:33019"/>
        <dbReference type="ChEBI" id="CHEBI:61557"/>
        <dbReference type="ChEBI" id="CHEBI:140395"/>
        <dbReference type="EC" id="2.7.7.6"/>
    </reaction>
</comment>
<comment type="subunit">
    <text evidence="1">The RNAP catalytic core consists of 2 alpha, 1 beta, 1 beta' and 1 omega subunit. When a sigma factor is associated with the core the holoenzyme is formed, which can initiate transcription.</text>
</comment>
<comment type="similarity">
    <text evidence="1">Belongs to the RNA polymerase beta chain family.</text>
</comment>
<sequence length="1382" mass="155153">MLNSLKSGNRLRVDFAKNPQKIEIPNLLQLQQTSYDTFLMIGQEDRTTAGIEKVFKSIFPIHDVQNRLTLDYLGSEVGKPKYDVRESMVRGLTYSIPLKINIRLTLWDLDEKTGEKIGVKDMKEQSLFIREIPLMTDRTSFIVNGVERVVVNQLHRSPGVIFKEEESNTADNKLIYTGQIIPDRGSWLYFEYDSKDVLYVRINKRRKVPVTILFRALGYSKEDIIKLFYPIVNIKIKNNKFLTEFNPDDFMGRIEFDVKDDKGNLVIGAGKRLTARKAKALIEGGLKLIEYPLELLMDRSTANTIYDPESGEVLFDALTNLDELKLKKLLDLGFESFDIANDLAVGIDASIINAFKADAESLKLLKQTEQIDDENDLAAIRIYKVMRPGEPVTKEAAKDFVKKLFFDPERYDLTKVGRMKMNHKLGVNVPEYVTTLTYEDVIKTVQYLVKVKSGHGHIDDRDHLGNRRIRAIGELLANELHAGLIKMQKAIRDKMTTLSGTLEDLMPHDLVNSKMITSTITEFFTSGQLSQFMDQTNPLSEVTHKRRLSALGEGGLVKERAGFEVRDVHPTHYGRICPVETPEGQNIGLINTLSTFSKVNDLGFIEAPYKKVVDGVVTNEISYYTATQEEGLVIAPGSTKVDENGKIIEPLIEVRKNGEILLMERNSVDLIDISSQMVMGVAASLIPFLEHDDANRALMGSNMMRQAVPLLRPSAPVVGTGLEKIVARDAWEAIKANRAGLVEKADAKNIYIRGEDENGAFIDHYTVNKNVRTNNNTSFGQRIAVKEGDFVQKGQVIADGPSMDKGELAVGINAMVAFMPWNGYNYEDAIILSERLIEEDAFTSVHIYEKEIECRELKHGNEEITRDLPGVKEESISHLDNSGIVKVGTYVTPGMILVGKVTPKGEIKPTPEERLLRAIFGEKAGHVINKSLVCPTSMEGTVVDVKVFTKKGYEKDDRAVAEIESEKAELDLKHHDKLLMLDREEILKINDLLLKATLTKDVELDDVVYKKGETIPVDVLNNVNRFAMKKVVSSYSKEIEKAYNDIKEYFIKQKAHLREEHEEKLQILEHDDILSSGVIKQVKVYIATKRKIKVGDKMAGRHGNKGIVSNIVPKVDMPYLEDGTTVDVILNPLGVPSRMNIGQILEVHLGLAGKKLGNQIQDIFEAKRADFIAELRAKMTEIASVAKLMNGKAFMDSLNDEELVQYAQDWAKGVRFATQIFDGVKAEEFAKLFELAKIDSDGKCVLFDGKTGEKMKERVNVGYMYMLKLHHLVDEKVHARSTGPYSLVTQQPVGGKALFGGQRFGEMEVWALEAYGATNVLKEMLTTKSDDVEGRTKAYRAIANGENVPNSGVPETFFVLTKELKALALDVEIFGEVENNEQ</sequence>
<gene>
    <name evidence="1" type="primary">rpoB</name>
    <name type="ordered locus">Abu_1884</name>
</gene>
<keyword id="KW-0240">DNA-directed RNA polymerase</keyword>
<keyword id="KW-0548">Nucleotidyltransferase</keyword>
<keyword id="KW-1185">Reference proteome</keyword>
<keyword id="KW-0804">Transcription</keyword>
<keyword id="KW-0808">Transferase</keyword>
<feature type="chain" id="PRO_0000329163" description="DNA-directed RNA polymerase subunit beta">
    <location>
        <begin position="1"/>
        <end position="1382"/>
    </location>
</feature>
<protein>
    <recommendedName>
        <fullName evidence="1">DNA-directed RNA polymerase subunit beta</fullName>
        <shortName evidence="1">RNAP subunit beta</shortName>
        <ecNumber evidence="1">2.7.7.6</ecNumber>
    </recommendedName>
    <alternativeName>
        <fullName evidence="1">RNA polymerase subunit beta</fullName>
    </alternativeName>
    <alternativeName>
        <fullName evidence="1">Transcriptase subunit beta</fullName>
    </alternativeName>
</protein>
<proteinExistence type="inferred from homology"/>
<evidence type="ECO:0000255" key="1">
    <source>
        <dbReference type="HAMAP-Rule" id="MF_01321"/>
    </source>
</evidence>
<name>RPOB_ALIB4</name>